<gene>
    <name evidence="1" type="primary">dnaJ</name>
    <name type="ordered locus">YpAngola_A0796</name>
</gene>
<organism>
    <name type="scientific">Yersinia pestis bv. Antiqua (strain Angola)</name>
    <dbReference type="NCBI Taxonomy" id="349746"/>
    <lineage>
        <taxon>Bacteria</taxon>
        <taxon>Pseudomonadati</taxon>
        <taxon>Pseudomonadota</taxon>
        <taxon>Gammaproteobacteria</taxon>
        <taxon>Enterobacterales</taxon>
        <taxon>Yersiniaceae</taxon>
        <taxon>Yersinia</taxon>
    </lineage>
</organism>
<dbReference type="EMBL" id="CP000901">
    <property type="protein sequence ID" value="ABX85264.1"/>
    <property type="molecule type" value="Genomic_DNA"/>
</dbReference>
<dbReference type="RefSeq" id="WP_002209249.1">
    <property type="nucleotide sequence ID" value="NZ_CP009935.1"/>
</dbReference>
<dbReference type="SMR" id="A9R014"/>
<dbReference type="GeneID" id="57974140"/>
<dbReference type="KEGG" id="ypg:YpAngola_A0796"/>
<dbReference type="PATRIC" id="fig|349746.12.peg.1745"/>
<dbReference type="GO" id="GO:0005737">
    <property type="term" value="C:cytoplasm"/>
    <property type="evidence" value="ECO:0007669"/>
    <property type="project" value="UniProtKB-SubCell"/>
</dbReference>
<dbReference type="GO" id="GO:0005524">
    <property type="term" value="F:ATP binding"/>
    <property type="evidence" value="ECO:0007669"/>
    <property type="project" value="InterPro"/>
</dbReference>
<dbReference type="GO" id="GO:0031072">
    <property type="term" value="F:heat shock protein binding"/>
    <property type="evidence" value="ECO:0007669"/>
    <property type="project" value="InterPro"/>
</dbReference>
<dbReference type="GO" id="GO:0051082">
    <property type="term" value="F:unfolded protein binding"/>
    <property type="evidence" value="ECO:0007669"/>
    <property type="project" value="UniProtKB-UniRule"/>
</dbReference>
<dbReference type="GO" id="GO:0008270">
    <property type="term" value="F:zinc ion binding"/>
    <property type="evidence" value="ECO:0007669"/>
    <property type="project" value="UniProtKB-UniRule"/>
</dbReference>
<dbReference type="GO" id="GO:0051085">
    <property type="term" value="P:chaperone cofactor-dependent protein refolding"/>
    <property type="evidence" value="ECO:0007669"/>
    <property type="project" value="TreeGrafter"/>
</dbReference>
<dbReference type="GO" id="GO:0006260">
    <property type="term" value="P:DNA replication"/>
    <property type="evidence" value="ECO:0007669"/>
    <property type="project" value="UniProtKB-KW"/>
</dbReference>
<dbReference type="GO" id="GO:0042026">
    <property type="term" value="P:protein refolding"/>
    <property type="evidence" value="ECO:0007669"/>
    <property type="project" value="TreeGrafter"/>
</dbReference>
<dbReference type="GO" id="GO:0009408">
    <property type="term" value="P:response to heat"/>
    <property type="evidence" value="ECO:0007669"/>
    <property type="project" value="InterPro"/>
</dbReference>
<dbReference type="CDD" id="cd06257">
    <property type="entry name" value="DnaJ"/>
    <property type="match status" value="1"/>
</dbReference>
<dbReference type="CDD" id="cd10747">
    <property type="entry name" value="DnaJ_C"/>
    <property type="match status" value="1"/>
</dbReference>
<dbReference type="CDD" id="cd10719">
    <property type="entry name" value="DnaJ_zf"/>
    <property type="match status" value="1"/>
</dbReference>
<dbReference type="FunFam" id="1.10.287.110:FF:000003">
    <property type="entry name" value="Molecular chaperone DnaJ"/>
    <property type="match status" value="1"/>
</dbReference>
<dbReference type="FunFam" id="2.10.230.10:FF:000002">
    <property type="entry name" value="Molecular chaperone DnaJ"/>
    <property type="match status" value="1"/>
</dbReference>
<dbReference type="FunFam" id="2.60.260.20:FF:000004">
    <property type="entry name" value="Molecular chaperone DnaJ"/>
    <property type="match status" value="1"/>
</dbReference>
<dbReference type="Gene3D" id="1.10.287.110">
    <property type="entry name" value="DnaJ domain"/>
    <property type="match status" value="1"/>
</dbReference>
<dbReference type="Gene3D" id="2.10.230.10">
    <property type="entry name" value="Heat shock protein DnaJ, cysteine-rich domain"/>
    <property type="match status" value="1"/>
</dbReference>
<dbReference type="Gene3D" id="2.60.260.20">
    <property type="entry name" value="Urease metallochaperone UreE, N-terminal domain"/>
    <property type="match status" value="2"/>
</dbReference>
<dbReference type="HAMAP" id="MF_01152">
    <property type="entry name" value="DnaJ"/>
    <property type="match status" value="1"/>
</dbReference>
<dbReference type="InterPro" id="IPR012724">
    <property type="entry name" value="DnaJ"/>
</dbReference>
<dbReference type="InterPro" id="IPR002939">
    <property type="entry name" value="DnaJ_C"/>
</dbReference>
<dbReference type="InterPro" id="IPR001623">
    <property type="entry name" value="DnaJ_domain"/>
</dbReference>
<dbReference type="InterPro" id="IPR018253">
    <property type="entry name" value="DnaJ_domain_CS"/>
</dbReference>
<dbReference type="InterPro" id="IPR008971">
    <property type="entry name" value="HSP40/DnaJ_pept-bd"/>
</dbReference>
<dbReference type="InterPro" id="IPR001305">
    <property type="entry name" value="HSP_DnaJ_Cys-rich_dom"/>
</dbReference>
<dbReference type="InterPro" id="IPR036410">
    <property type="entry name" value="HSP_DnaJ_Cys-rich_dom_sf"/>
</dbReference>
<dbReference type="InterPro" id="IPR036869">
    <property type="entry name" value="J_dom_sf"/>
</dbReference>
<dbReference type="NCBIfam" id="TIGR02349">
    <property type="entry name" value="DnaJ_bact"/>
    <property type="match status" value="1"/>
</dbReference>
<dbReference type="NCBIfam" id="NF008035">
    <property type="entry name" value="PRK10767.1"/>
    <property type="match status" value="1"/>
</dbReference>
<dbReference type="PANTHER" id="PTHR43096:SF48">
    <property type="entry name" value="CHAPERONE PROTEIN DNAJ"/>
    <property type="match status" value="1"/>
</dbReference>
<dbReference type="PANTHER" id="PTHR43096">
    <property type="entry name" value="DNAJ HOMOLOG 1, MITOCHONDRIAL-RELATED"/>
    <property type="match status" value="1"/>
</dbReference>
<dbReference type="Pfam" id="PF00226">
    <property type="entry name" value="DnaJ"/>
    <property type="match status" value="1"/>
</dbReference>
<dbReference type="Pfam" id="PF01556">
    <property type="entry name" value="DnaJ_C"/>
    <property type="match status" value="1"/>
</dbReference>
<dbReference type="Pfam" id="PF00684">
    <property type="entry name" value="DnaJ_CXXCXGXG"/>
    <property type="match status" value="1"/>
</dbReference>
<dbReference type="PRINTS" id="PR00625">
    <property type="entry name" value="JDOMAIN"/>
</dbReference>
<dbReference type="SMART" id="SM00271">
    <property type="entry name" value="DnaJ"/>
    <property type="match status" value="1"/>
</dbReference>
<dbReference type="SUPFAM" id="SSF46565">
    <property type="entry name" value="Chaperone J-domain"/>
    <property type="match status" value="1"/>
</dbReference>
<dbReference type="SUPFAM" id="SSF57938">
    <property type="entry name" value="DnaJ/Hsp40 cysteine-rich domain"/>
    <property type="match status" value="1"/>
</dbReference>
<dbReference type="SUPFAM" id="SSF49493">
    <property type="entry name" value="HSP40/DnaJ peptide-binding domain"/>
    <property type="match status" value="2"/>
</dbReference>
<dbReference type="PROSITE" id="PS00636">
    <property type="entry name" value="DNAJ_1"/>
    <property type="match status" value="1"/>
</dbReference>
<dbReference type="PROSITE" id="PS50076">
    <property type="entry name" value="DNAJ_2"/>
    <property type="match status" value="1"/>
</dbReference>
<dbReference type="PROSITE" id="PS51188">
    <property type="entry name" value="ZF_CR"/>
    <property type="match status" value="1"/>
</dbReference>
<comment type="function">
    <text evidence="1">Participates actively in the response to hyperosmotic and heat shock by preventing the aggregation of stress-denatured proteins and by disaggregating proteins, also in an autonomous, DnaK-independent fashion. Unfolded proteins bind initially to DnaJ; upon interaction with the DnaJ-bound protein, DnaK hydrolyzes its bound ATP, resulting in the formation of a stable complex. GrpE releases ADP from DnaK; ATP binding to DnaK triggers the release of the substrate protein, thus completing the reaction cycle. Several rounds of ATP-dependent interactions between DnaJ, DnaK and GrpE are required for fully efficient folding. Also involved, together with DnaK and GrpE, in the DNA replication of plasmids through activation of initiation proteins.</text>
</comment>
<comment type="cofactor">
    <cofactor evidence="1">
        <name>Zn(2+)</name>
        <dbReference type="ChEBI" id="CHEBI:29105"/>
    </cofactor>
    <text evidence="1">Binds 2 Zn(2+) ions per monomer.</text>
</comment>
<comment type="subunit">
    <text evidence="1">Homodimer.</text>
</comment>
<comment type="subcellular location">
    <subcellularLocation>
        <location evidence="1">Cytoplasm</location>
    </subcellularLocation>
</comment>
<comment type="domain">
    <text evidence="1">The J domain is necessary and sufficient to stimulate DnaK ATPase activity. Zinc center 1 plays an important role in the autonomous, DnaK-independent chaperone activity of DnaJ. Zinc center 2 is essential for interaction with DnaK and for DnaJ activity.</text>
</comment>
<comment type="similarity">
    <text evidence="1">Belongs to the DnaJ family.</text>
</comment>
<feature type="chain" id="PRO_1000137743" description="Chaperone protein DnaJ">
    <location>
        <begin position="1"/>
        <end position="379"/>
    </location>
</feature>
<feature type="domain" description="J" evidence="1">
    <location>
        <begin position="5"/>
        <end position="70"/>
    </location>
</feature>
<feature type="repeat" description="CXXCXGXG motif">
    <location>
        <begin position="147"/>
        <end position="154"/>
    </location>
</feature>
<feature type="repeat" description="CXXCXGXG motif">
    <location>
        <begin position="164"/>
        <end position="171"/>
    </location>
</feature>
<feature type="repeat" description="CXXCXGXG motif">
    <location>
        <begin position="186"/>
        <end position="193"/>
    </location>
</feature>
<feature type="repeat" description="CXXCXGXG motif">
    <location>
        <begin position="200"/>
        <end position="207"/>
    </location>
</feature>
<feature type="zinc finger region" description="CR-type" evidence="1">
    <location>
        <begin position="134"/>
        <end position="212"/>
    </location>
</feature>
<feature type="binding site" evidence="1">
    <location>
        <position position="147"/>
    </location>
    <ligand>
        <name>Zn(2+)</name>
        <dbReference type="ChEBI" id="CHEBI:29105"/>
        <label>1</label>
    </ligand>
</feature>
<feature type="binding site" evidence="1">
    <location>
        <position position="150"/>
    </location>
    <ligand>
        <name>Zn(2+)</name>
        <dbReference type="ChEBI" id="CHEBI:29105"/>
        <label>1</label>
    </ligand>
</feature>
<feature type="binding site" evidence="1">
    <location>
        <position position="164"/>
    </location>
    <ligand>
        <name>Zn(2+)</name>
        <dbReference type="ChEBI" id="CHEBI:29105"/>
        <label>2</label>
    </ligand>
</feature>
<feature type="binding site" evidence="1">
    <location>
        <position position="167"/>
    </location>
    <ligand>
        <name>Zn(2+)</name>
        <dbReference type="ChEBI" id="CHEBI:29105"/>
        <label>2</label>
    </ligand>
</feature>
<feature type="binding site" evidence="1">
    <location>
        <position position="186"/>
    </location>
    <ligand>
        <name>Zn(2+)</name>
        <dbReference type="ChEBI" id="CHEBI:29105"/>
        <label>2</label>
    </ligand>
</feature>
<feature type="binding site" evidence="1">
    <location>
        <position position="189"/>
    </location>
    <ligand>
        <name>Zn(2+)</name>
        <dbReference type="ChEBI" id="CHEBI:29105"/>
        <label>2</label>
    </ligand>
</feature>
<feature type="binding site" evidence="1">
    <location>
        <position position="200"/>
    </location>
    <ligand>
        <name>Zn(2+)</name>
        <dbReference type="ChEBI" id="CHEBI:29105"/>
        <label>1</label>
    </ligand>
</feature>
<feature type="binding site" evidence="1">
    <location>
        <position position="203"/>
    </location>
    <ligand>
        <name>Zn(2+)</name>
        <dbReference type="ChEBI" id="CHEBI:29105"/>
        <label>1</label>
    </ligand>
</feature>
<proteinExistence type="inferred from homology"/>
<reference key="1">
    <citation type="journal article" date="2010" name="J. Bacteriol.">
        <title>Genome sequence of the deep-rooted Yersinia pestis strain Angola reveals new insights into the evolution and pangenome of the plague bacterium.</title>
        <authorList>
            <person name="Eppinger M."/>
            <person name="Worsham P.L."/>
            <person name="Nikolich M.P."/>
            <person name="Riley D.R."/>
            <person name="Sebastian Y."/>
            <person name="Mou S."/>
            <person name="Achtman M."/>
            <person name="Lindler L.E."/>
            <person name="Ravel J."/>
        </authorList>
    </citation>
    <scope>NUCLEOTIDE SEQUENCE [LARGE SCALE GENOMIC DNA]</scope>
    <source>
        <strain>Angola</strain>
    </source>
</reference>
<name>DNAJ_YERPG</name>
<protein>
    <recommendedName>
        <fullName evidence="1">Chaperone protein DnaJ</fullName>
    </recommendedName>
</protein>
<keyword id="KW-0143">Chaperone</keyword>
<keyword id="KW-0963">Cytoplasm</keyword>
<keyword id="KW-0235">DNA replication</keyword>
<keyword id="KW-0479">Metal-binding</keyword>
<keyword id="KW-0677">Repeat</keyword>
<keyword id="KW-0346">Stress response</keyword>
<keyword id="KW-0862">Zinc</keyword>
<keyword id="KW-0863">Zinc-finger</keyword>
<evidence type="ECO:0000255" key="1">
    <source>
        <dbReference type="HAMAP-Rule" id="MF_01152"/>
    </source>
</evidence>
<sequence>MAKRDYYEVLGVSRDAEEREIKKAYKRLAMKFHPDRQSEDKNAEEKFKEAKEAYEILTDAQKRAAYDQYGHAAFEQGGMGGGGFGGGGGGADFSDIFGDVFGDIFGGGRRQQRASRGSDLRYNMDLTLEEAVRGVTKEIRIPTLDECDVCHGSGAKPGSSPVTCPTCHGAGQVQMRQGFFTVQQACPHCHGRGQIIKDPCNKCHGHGRVEKSKTLSVKIPAGVDTGDRIRLSGEGEAGEHGAPSGDLYVQVQVKAHPIFEREGNNLYCEVPINFAMAALGGEIEVPTLDGRVKLKIPAETQTGKMFRMRGKGVKSVRGGSQGDLLCRVVVETPVSLSEKQKQLLRELEESFVGAAGEKNSPRAKSFLDGVKKFFDDLTR</sequence>
<accession>A9R014</accession>